<sequence length="79" mass="8491">MDVQRSSYIFIALSIIAMFLITGVKPEVRDICPGVCHAGIEPDCDTLCISMGFTGGYCQGLTCCCNPKSSKSSIINRPI</sequence>
<dbReference type="EMBL" id="AC007070">
    <property type="status" value="NOT_ANNOTATED_CDS"/>
    <property type="molecule type" value="Genomic_DNA"/>
</dbReference>
<dbReference type="EMBL" id="CP002685">
    <property type="protein sequence ID" value="AEC07683.1"/>
    <property type="molecule type" value="Genomic_DNA"/>
</dbReference>
<dbReference type="RefSeq" id="NP_001031412.1">
    <property type="nucleotide sequence ID" value="NM_001036335.2"/>
</dbReference>
<dbReference type="SMR" id="P82790"/>
<dbReference type="STRING" id="3702.P82790"/>
<dbReference type="PaxDb" id="3702-AT2G25295.1"/>
<dbReference type="EnsemblPlants" id="AT2G25295.1">
    <property type="protein sequence ID" value="AT2G25295.1"/>
    <property type="gene ID" value="AT2G25295"/>
</dbReference>
<dbReference type="GeneID" id="3767828"/>
<dbReference type="Gramene" id="AT2G25295.1">
    <property type="protein sequence ID" value="AT2G25295.1"/>
    <property type="gene ID" value="AT2G25295"/>
</dbReference>
<dbReference type="KEGG" id="ath:AT2G25295"/>
<dbReference type="Araport" id="AT2G25295"/>
<dbReference type="TAIR" id="AT2G25295">
    <property type="gene designation" value="LCR81"/>
</dbReference>
<dbReference type="HOGENOM" id="CLU_2609304_0_0_1"/>
<dbReference type="InParanoid" id="P82790"/>
<dbReference type="OMA" id="CHAGIEP"/>
<dbReference type="PhylomeDB" id="P82790"/>
<dbReference type="PRO" id="PR:P82790"/>
<dbReference type="Proteomes" id="UP000006548">
    <property type="component" value="Chromosome 2"/>
</dbReference>
<dbReference type="ExpressionAtlas" id="P82790">
    <property type="expression patterns" value="baseline and differential"/>
</dbReference>
<dbReference type="GO" id="GO:0005576">
    <property type="term" value="C:extracellular region"/>
    <property type="evidence" value="ECO:0007669"/>
    <property type="project" value="UniProtKB-SubCell"/>
</dbReference>
<dbReference type="GO" id="GO:0050832">
    <property type="term" value="P:defense response to fungus"/>
    <property type="evidence" value="ECO:0007669"/>
    <property type="project" value="UniProtKB-KW"/>
</dbReference>
<dbReference type="GO" id="GO:0031640">
    <property type="term" value="P:killing of cells of another organism"/>
    <property type="evidence" value="ECO:0007669"/>
    <property type="project" value="UniProtKB-KW"/>
</dbReference>
<accession>P82790</accession>
<name>DEF80_ARATH</name>
<feature type="signal peptide" evidence="2">
    <location>
        <begin position="1"/>
        <end position="26"/>
    </location>
</feature>
<feature type="chain" id="PRO_0000017305" description="Putative defensin-like protein 80">
    <location>
        <begin position="27"/>
        <end position="79"/>
    </location>
</feature>
<feature type="disulfide bond" evidence="1">
    <location>
        <begin position="32"/>
        <end position="65"/>
    </location>
</feature>
<feature type="disulfide bond" evidence="1">
    <location>
        <begin position="36"/>
        <end position="58"/>
    </location>
</feature>
<feature type="disulfide bond" evidence="1">
    <location>
        <begin position="44"/>
        <end position="63"/>
    </location>
</feature>
<feature type="disulfide bond" evidence="1">
    <location>
        <begin position="48"/>
        <end position="64"/>
    </location>
</feature>
<protein>
    <recommendedName>
        <fullName>Putative defensin-like protein 80</fullName>
    </recommendedName>
    <alternativeName>
        <fullName>Putative low-molecular-weight cysteine-rich protein 81</fullName>
        <shortName>Protein LCR81</shortName>
    </alternativeName>
</protein>
<keyword id="KW-0929">Antimicrobial</keyword>
<keyword id="KW-1015">Disulfide bond</keyword>
<keyword id="KW-0295">Fungicide</keyword>
<keyword id="KW-0611">Plant defense</keyword>
<keyword id="KW-1185">Reference proteome</keyword>
<keyword id="KW-0964">Secreted</keyword>
<keyword id="KW-0732">Signal</keyword>
<organism evidence="3">
    <name type="scientific">Arabidopsis thaliana</name>
    <name type="common">Mouse-ear cress</name>
    <dbReference type="NCBI Taxonomy" id="3702"/>
    <lineage>
        <taxon>Eukaryota</taxon>
        <taxon>Viridiplantae</taxon>
        <taxon>Streptophyta</taxon>
        <taxon>Embryophyta</taxon>
        <taxon>Tracheophyta</taxon>
        <taxon>Spermatophyta</taxon>
        <taxon>Magnoliopsida</taxon>
        <taxon>eudicotyledons</taxon>
        <taxon>Gunneridae</taxon>
        <taxon>Pentapetalae</taxon>
        <taxon>rosids</taxon>
        <taxon>malvids</taxon>
        <taxon>Brassicales</taxon>
        <taxon>Brassicaceae</taxon>
        <taxon>Camelineae</taxon>
        <taxon>Arabidopsis</taxon>
    </lineage>
</organism>
<gene>
    <name type="primary">LCR81</name>
    <name type="ordered locus">At2g25295</name>
    <name type="ORF">T22F11</name>
</gene>
<evidence type="ECO:0000250" key="1"/>
<evidence type="ECO:0000255" key="2"/>
<evidence type="ECO:0000305" key="3"/>
<comment type="subcellular location">
    <subcellularLocation>
        <location evidence="1">Secreted</location>
    </subcellularLocation>
</comment>
<comment type="similarity">
    <text evidence="3">Belongs to the DEFL family.</text>
</comment>
<reference evidence="3" key="1">
    <citation type="journal article" date="1999" name="Nature">
        <title>Sequence and analysis of chromosome 2 of the plant Arabidopsis thaliana.</title>
        <authorList>
            <person name="Lin X."/>
            <person name="Kaul S."/>
            <person name="Rounsley S.D."/>
            <person name="Shea T.P."/>
            <person name="Benito M.-I."/>
            <person name="Town C.D."/>
            <person name="Fujii C.Y."/>
            <person name="Mason T.M."/>
            <person name="Bowman C.L."/>
            <person name="Barnstead M.E."/>
            <person name="Feldblyum T.V."/>
            <person name="Buell C.R."/>
            <person name="Ketchum K.A."/>
            <person name="Lee J.J."/>
            <person name="Ronning C.M."/>
            <person name="Koo H.L."/>
            <person name="Moffat K.S."/>
            <person name="Cronin L.A."/>
            <person name="Shen M."/>
            <person name="Pai G."/>
            <person name="Van Aken S."/>
            <person name="Umayam L."/>
            <person name="Tallon L.J."/>
            <person name="Gill J.E."/>
            <person name="Adams M.D."/>
            <person name="Carrera A.J."/>
            <person name="Creasy T.H."/>
            <person name="Goodman H.M."/>
            <person name="Somerville C.R."/>
            <person name="Copenhaver G.P."/>
            <person name="Preuss D."/>
            <person name="Nierman W.C."/>
            <person name="White O."/>
            <person name="Eisen J.A."/>
            <person name="Salzberg S.L."/>
            <person name="Fraser C.M."/>
            <person name="Venter J.C."/>
        </authorList>
    </citation>
    <scope>NUCLEOTIDE SEQUENCE [LARGE SCALE GENOMIC DNA]</scope>
    <source>
        <strain>cv. Columbia</strain>
    </source>
</reference>
<reference key="2">
    <citation type="journal article" date="2017" name="Plant J.">
        <title>Araport11: a complete reannotation of the Arabidopsis thaliana reference genome.</title>
        <authorList>
            <person name="Cheng C.Y."/>
            <person name="Krishnakumar V."/>
            <person name="Chan A.P."/>
            <person name="Thibaud-Nissen F."/>
            <person name="Schobel S."/>
            <person name="Town C.D."/>
        </authorList>
    </citation>
    <scope>GENOME REANNOTATION</scope>
    <source>
        <strain>cv. Columbia</strain>
    </source>
</reference>
<reference evidence="3" key="3">
    <citation type="journal article" date="2001" name="Plant Mol. Biol.">
        <title>Two large Arabidopsis thaliana gene families are homologous to the Brassica gene superfamily that encodes pollen coat proteins and the male component of the self-incompatibility response.</title>
        <authorList>
            <person name="Vanoosthuyse V."/>
            <person name="Miege C."/>
            <person name="Dumas C."/>
            <person name="Cock J.M."/>
        </authorList>
    </citation>
    <scope>IDENTIFICATION</scope>
</reference>
<reference key="4">
    <citation type="journal article" date="2005" name="Plant Physiol.">
        <title>Genome organization of more than 300 defensin-like genes in Arabidopsis.</title>
        <authorList>
            <person name="Silverstein K.A.T."/>
            <person name="Graham M.A."/>
            <person name="Paape T.D."/>
            <person name="VandenBosch K.A."/>
        </authorList>
    </citation>
    <scope>GENE FAMILY</scope>
</reference>
<proteinExistence type="inferred from homology"/>